<comment type="function">
    <text evidence="1">Binds directly to 23S ribosomal RNA and is necessary for the in vitro assembly process of the 50S ribosomal subunit. It is not involved in the protein synthesizing functions of that subunit.</text>
</comment>
<comment type="similarity">
    <text evidence="1">Belongs to the bacterial ribosomal protein bL20 family.</text>
</comment>
<sequence length="119" mass="13443">MPRVKRGVTARARHKKVLTKAKGYYGARSRVFRVAKQAVIKAAQYAYRDRKQRKRQFRALWIVRINAAAREHGLSYSRLINGLMKASVAIDRKNLAELAVYDKAAFGKLAEKAKQALGG</sequence>
<protein>
    <recommendedName>
        <fullName evidence="1">Large ribosomal subunit protein bL20</fullName>
    </recommendedName>
    <alternativeName>
        <fullName evidence="2">50S ribosomal protein L20</fullName>
    </alternativeName>
</protein>
<evidence type="ECO:0000255" key="1">
    <source>
        <dbReference type="HAMAP-Rule" id="MF_00382"/>
    </source>
</evidence>
<evidence type="ECO:0000305" key="2"/>
<gene>
    <name evidence="1" type="primary">rplT</name>
    <name type="ordered locus">CBUD_1412</name>
</gene>
<keyword id="KW-0687">Ribonucleoprotein</keyword>
<keyword id="KW-0689">Ribosomal protein</keyword>
<keyword id="KW-0694">RNA-binding</keyword>
<keyword id="KW-0699">rRNA-binding</keyword>
<accession>A9KGB8</accession>
<proteinExistence type="inferred from homology"/>
<feature type="chain" id="PRO_1000080067" description="Large ribosomal subunit protein bL20">
    <location>
        <begin position="1"/>
        <end position="119"/>
    </location>
</feature>
<organism>
    <name type="scientific">Coxiella burnetii (strain Dugway 5J108-111)</name>
    <dbReference type="NCBI Taxonomy" id="434922"/>
    <lineage>
        <taxon>Bacteria</taxon>
        <taxon>Pseudomonadati</taxon>
        <taxon>Pseudomonadota</taxon>
        <taxon>Gammaproteobacteria</taxon>
        <taxon>Legionellales</taxon>
        <taxon>Coxiellaceae</taxon>
        <taxon>Coxiella</taxon>
    </lineage>
</organism>
<dbReference type="EMBL" id="CP000733">
    <property type="protein sequence ID" value="ABS77430.1"/>
    <property type="molecule type" value="Genomic_DNA"/>
</dbReference>
<dbReference type="RefSeq" id="WP_005770935.1">
    <property type="nucleotide sequence ID" value="NC_009727.1"/>
</dbReference>
<dbReference type="SMR" id="A9KGB8"/>
<dbReference type="KEGG" id="cbd:CBUD_1412"/>
<dbReference type="HOGENOM" id="CLU_123265_0_1_6"/>
<dbReference type="Proteomes" id="UP000008555">
    <property type="component" value="Chromosome"/>
</dbReference>
<dbReference type="GO" id="GO:1990904">
    <property type="term" value="C:ribonucleoprotein complex"/>
    <property type="evidence" value="ECO:0007669"/>
    <property type="project" value="UniProtKB-KW"/>
</dbReference>
<dbReference type="GO" id="GO:0005840">
    <property type="term" value="C:ribosome"/>
    <property type="evidence" value="ECO:0007669"/>
    <property type="project" value="UniProtKB-KW"/>
</dbReference>
<dbReference type="GO" id="GO:0019843">
    <property type="term" value="F:rRNA binding"/>
    <property type="evidence" value="ECO:0007669"/>
    <property type="project" value="UniProtKB-UniRule"/>
</dbReference>
<dbReference type="GO" id="GO:0003735">
    <property type="term" value="F:structural constituent of ribosome"/>
    <property type="evidence" value="ECO:0007669"/>
    <property type="project" value="InterPro"/>
</dbReference>
<dbReference type="GO" id="GO:0000027">
    <property type="term" value="P:ribosomal large subunit assembly"/>
    <property type="evidence" value="ECO:0007669"/>
    <property type="project" value="UniProtKB-UniRule"/>
</dbReference>
<dbReference type="GO" id="GO:0006412">
    <property type="term" value="P:translation"/>
    <property type="evidence" value="ECO:0007669"/>
    <property type="project" value="InterPro"/>
</dbReference>
<dbReference type="CDD" id="cd07026">
    <property type="entry name" value="Ribosomal_L20"/>
    <property type="match status" value="1"/>
</dbReference>
<dbReference type="FunFam" id="1.10.1900.20:FF:000001">
    <property type="entry name" value="50S ribosomal protein L20"/>
    <property type="match status" value="1"/>
</dbReference>
<dbReference type="Gene3D" id="6.10.160.10">
    <property type="match status" value="1"/>
</dbReference>
<dbReference type="Gene3D" id="1.10.1900.20">
    <property type="entry name" value="Ribosomal protein L20"/>
    <property type="match status" value="1"/>
</dbReference>
<dbReference type="HAMAP" id="MF_00382">
    <property type="entry name" value="Ribosomal_bL20"/>
    <property type="match status" value="1"/>
</dbReference>
<dbReference type="InterPro" id="IPR005813">
    <property type="entry name" value="Ribosomal_bL20"/>
</dbReference>
<dbReference type="InterPro" id="IPR049946">
    <property type="entry name" value="RIBOSOMAL_L20_CS"/>
</dbReference>
<dbReference type="InterPro" id="IPR035566">
    <property type="entry name" value="Ribosomal_protein_bL20_C"/>
</dbReference>
<dbReference type="NCBIfam" id="TIGR01032">
    <property type="entry name" value="rplT_bact"/>
    <property type="match status" value="1"/>
</dbReference>
<dbReference type="PANTHER" id="PTHR10986">
    <property type="entry name" value="39S RIBOSOMAL PROTEIN L20"/>
    <property type="match status" value="1"/>
</dbReference>
<dbReference type="Pfam" id="PF00453">
    <property type="entry name" value="Ribosomal_L20"/>
    <property type="match status" value="1"/>
</dbReference>
<dbReference type="PRINTS" id="PR00062">
    <property type="entry name" value="RIBOSOMALL20"/>
</dbReference>
<dbReference type="SUPFAM" id="SSF74731">
    <property type="entry name" value="Ribosomal protein L20"/>
    <property type="match status" value="1"/>
</dbReference>
<dbReference type="PROSITE" id="PS00937">
    <property type="entry name" value="RIBOSOMAL_L20"/>
    <property type="match status" value="1"/>
</dbReference>
<name>RL20_COXBN</name>
<reference key="1">
    <citation type="journal article" date="2009" name="Infect. Immun.">
        <title>Comparative genomics reveal extensive transposon-mediated genomic plasticity and diversity among potential effector proteins within the genus Coxiella.</title>
        <authorList>
            <person name="Beare P.A."/>
            <person name="Unsworth N."/>
            <person name="Andoh M."/>
            <person name="Voth D.E."/>
            <person name="Omsland A."/>
            <person name="Gilk S.D."/>
            <person name="Williams K.P."/>
            <person name="Sobral B.W."/>
            <person name="Kupko J.J. III"/>
            <person name="Porcella S.F."/>
            <person name="Samuel J.E."/>
            <person name="Heinzen R.A."/>
        </authorList>
    </citation>
    <scope>NUCLEOTIDE SEQUENCE [LARGE SCALE GENOMIC DNA]</scope>
    <source>
        <strain>Dugway 5J108-111</strain>
    </source>
</reference>